<feature type="chain" id="PRO_1000215202" description="dITP/XTP pyrophosphatase">
    <location>
        <begin position="1"/>
        <end position="205"/>
    </location>
</feature>
<feature type="active site" description="Proton acceptor" evidence="1">
    <location>
        <position position="77"/>
    </location>
</feature>
<feature type="binding site" evidence="1">
    <location>
        <begin position="16"/>
        <end position="21"/>
    </location>
    <ligand>
        <name>substrate</name>
    </ligand>
</feature>
<feature type="binding site" evidence="1">
    <location>
        <position position="48"/>
    </location>
    <ligand>
        <name>Mg(2+)</name>
        <dbReference type="ChEBI" id="CHEBI:18420"/>
    </ligand>
</feature>
<feature type="binding site" evidence="1">
    <location>
        <position position="77"/>
    </location>
    <ligand>
        <name>Mg(2+)</name>
        <dbReference type="ChEBI" id="CHEBI:18420"/>
    </ligand>
</feature>
<feature type="binding site" evidence="1">
    <location>
        <position position="78"/>
    </location>
    <ligand>
        <name>substrate</name>
    </ligand>
</feature>
<feature type="binding site" evidence="1">
    <location>
        <begin position="162"/>
        <end position="165"/>
    </location>
    <ligand>
        <name>substrate</name>
    </ligand>
</feature>
<feature type="binding site" evidence="1">
    <location>
        <position position="185"/>
    </location>
    <ligand>
        <name>substrate</name>
    </ligand>
</feature>
<feature type="binding site" evidence="1">
    <location>
        <begin position="190"/>
        <end position="191"/>
    </location>
    <ligand>
        <name>substrate</name>
    </ligand>
</feature>
<keyword id="KW-0378">Hydrolase</keyword>
<keyword id="KW-0460">Magnesium</keyword>
<keyword id="KW-0479">Metal-binding</keyword>
<keyword id="KW-0546">Nucleotide metabolism</keyword>
<keyword id="KW-0547">Nucleotide-binding</keyword>
<keyword id="KW-1185">Reference proteome</keyword>
<protein>
    <recommendedName>
        <fullName evidence="1">dITP/XTP pyrophosphatase</fullName>
        <ecNumber evidence="1">3.6.1.66</ecNumber>
    </recommendedName>
    <alternativeName>
        <fullName evidence="1">Non-canonical purine NTP pyrophosphatase</fullName>
    </alternativeName>
    <alternativeName>
        <fullName evidence="1">Non-standard purine NTP pyrophosphatase</fullName>
    </alternativeName>
    <alternativeName>
        <fullName evidence="1">Nucleoside-triphosphate diphosphatase</fullName>
    </alternativeName>
    <alternativeName>
        <fullName evidence="1">Nucleoside-triphosphate pyrophosphatase</fullName>
        <shortName evidence="1">NTPase</shortName>
    </alternativeName>
</protein>
<comment type="function">
    <text evidence="1">Pyrophosphatase that catalyzes the hydrolysis of nucleoside triphosphates to their monophosphate derivatives, with a high preference for the non-canonical purine nucleotides XTP (xanthosine triphosphate), dITP (deoxyinosine triphosphate) and ITP. Seems to function as a house-cleaning enzyme that removes non-canonical purine nucleotides from the nucleotide pool, thus preventing their incorporation into DNA/RNA and avoiding chromosomal lesions.</text>
</comment>
<comment type="catalytic activity">
    <reaction evidence="1">
        <text>XTP + H2O = XMP + diphosphate + H(+)</text>
        <dbReference type="Rhea" id="RHEA:28610"/>
        <dbReference type="ChEBI" id="CHEBI:15377"/>
        <dbReference type="ChEBI" id="CHEBI:15378"/>
        <dbReference type="ChEBI" id="CHEBI:33019"/>
        <dbReference type="ChEBI" id="CHEBI:57464"/>
        <dbReference type="ChEBI" id="CHEBI:61314"/>
        <dbReference type="EC" id="3.6.1.66"/>
    </reaction>
</comment>
<comment type="catalytic activity">
    <reaction evidence="1">
        <text>dITP + H2O = dIMP + diphosphate + H(+)</text>
        <dbReference type="Rhea" id="RHEA:28342"/>
        <dbReference type="ChEBI" id="CHEBI:15377"/>
        <dbReference type="ChEBI" id="CHEBI:15378"/>
        <dbReference type="ChEBI" id="CHEBI:33019"/>
        <dbReference type="ChEBI" id="CHEBI:61194"/>
        <dbReference type="ChEBI" id="CHEBI:61382"/>
        <dbReference type="EC" id="3.6.1.66"/>
    </reaction>
</comment>
<comment type="catalytic activity">
    <reaction evidence="1">
        <text>ITP + H2O = IMP + diphosphate + H(+)</text>
        <dbReference type="Rhea" id="RHEA:29399"/>
        <dbReference type="ChEBI" id="CHEBI:15377"/>
        <dbReference type="ChEBI" id="CHEBI:15378"/>
        <dbReference type="ChEBI" id="CHEBI:33019"/>
        <dbReference type="ChEBI" id="CHEBI:58053"/>
        <dbReference type="ChEBI" id="CHEBI:61402"/>
        <dbReference type="EC" id="3.6.1.66"/>
    </reaction>
</comment>
<comment type="cofactor">
    <cofactor evidence="1">
        <name>Mg(2+)</name>
        <dbReference type="ChEBI" id="CHEBI:18420"/>
    </cofactor>
    <text evidence="1">Binds 1 Mg(2+) ion per subunit.</text>
</comment>
<comment type="subunit">
    <text evidence="1">Homodimer.</text>
</comment>
<comment type="similarity">
    <text evidence="1">Belongs to the HAM1 NTPase family.</text>
</comment>
<dbReference type="EC" id="3.6.1.66" evidence="1"/>
<dbReference type="EMBL" id="CU468135">
    <property type="protein sequence ID" value="CAO97887.1"/>
    <property type="molecule type" value="Genomic_DNA"/>
</dbReference>
<dbReference type="SMR" id="B2VEZ3"/>
<dbReference type="STRING" id="465817.ETA_28410"/>
<dbReference type="KEGG" id="eta:ETA_28410"/>
<dbReference type="eggNOG" id="COG0127">
    <property type="taxonomic scope" value="Bacteria"/>
</dbReference>
<dbReference type="HOGENOM" id="CLU_082080_0_3_6"/>
<dbReference type="Proteomes" id="UP000001726">
    <property type="component" value="Chromosome"/>
</dbReference>
<dbReference type="GO" id="GO:0005829">
    <property type="term" value="C:cytosol"/>
    <property type="evidence" value="ECO:0007669"/>
    <property type="project" value="TreeGrafter"/>
</dbReference>
<dbReference type="GO" id="GO:0035870">
    <property type="term" value="F:dITP diphosphatase activity"/>
    <property type="evidence" value="ECO:0007669"/>
    <property type="project" value="RHEA"/>
</dbReference>
<dbReference type="GO" id="GO:0036220">
    <property type="term" value="F:ITP diphosphatase activity"/>
    <property type="evidence" value="ECO:0007669"/>
    <property type="project" value="UniProtKB-EC"/>
</dbReference>
<dbReference type="GO" id="GO:0046872">
    <property type="term" value="F:metal ion binding"/>
    <property type="evidence" value="ECO:0007669"/>
    <property type="project" value="UniProtKB-KW"/>
</dbReference>
<dbReference type="GO" id="GO:0000166">
    <property type="term" value="F:nucleotide binding"/>
    <property type="evidence" value="ECO:0007669"/>
    <property type="project" value="UniProtKB-KW"/>
</dbReference>
<dbReference type="GO" id="GO:0017111">
    <property type="term" value="F:ribonucleoside triphosphate phosphatase activity"/>
    <property type="evidence" value="ECO:0007669"/>
    <property type="project" value="InterPro"/>
</dbReference>
<dbReference type="GO" id="GO:0036222">
    <property type="term" value="F:XTP diphosphatase activity"/>
    <property type="evidence" value="ECO:0007669"/>
    <property type="project" value="RHEA"/>
</dbReference>
<dbReference type="GO" id="GO:0009117">
    <property type="term" value="P:nucleotide metabolic process"/>
    <property type="evidence" value="ECO:0007669"/>
    <property type="project" value="UniProtKB-KW"/>
</dbReference>
<dbReference type="GO" id="GO:0009146">
    <property type="term" value="P:purine nucleoside triphosphate catabolic process"/>
    <property type="evidence" value="ECO:0007669"/>
    <property type="project" value="UniProtKB-UniRule"/>
</dbReference>
<dbReference type="CDD" id="cd00515">
    <property type="entry name" value="HAM1"/>
    <property type="match status" value="1"/>
</dbReference>
<dbReference type="FunFam" id="3.90.950.10:FF:000001">
    <property type="entry name" value="dITP/XTP pyrophosphatase"/>
    <property type="match status" value="1"/>
</dbReference>
<dbReference type="Gene3D" id="3.90.950.10">
    <property type="match status" value="1"/>
</dbReference>
<dbReference type="HAMAP" id="MF_01405">
    <property type="entry name" value="Non_canon_purine_NTPase"/>
    <property type="match status" value="1"/>
</dbReference>
<dbReference type="InterPro" id="IPR020922">
    <property type="entry name" value="dITP/XTP_pyrophosphatase"/>
</dbReference>
<dbReference type="InterPro" id="IPR029001">
    <property type="entry name" value="ITPase-like_fam"/>
</dbReference>
<dbReference type="InterPro" id="IPR002637">
    <property type="entry name" value="RdgB/HAM1"/>
</dbReference>
<dbReference type="NCBIfam" id="TIGR00042">
    <property type="entry name" value="RdgB/HAM1 family non-canonical purine NTP pyrophosphatase"/>
    <property type="match status" value="1"/>
</dbReference>
<dbReference type="PANTHER" id="PTHR11067:SF9">
    <property type="entry name" value="INOSINE TRIPHOSPHATE PYROPHOSPHATASE"/>
    <property type="match status" value="1"/>
</dbReference>
<dbReference type="PANTHER" id="PTHR11067">
    <property type="entry name" value="INOSINE TRIPHOSPHATE PYROPHOSPHATASE/HAM1 PROTEIN"/>
    <property type="match status" value="1"/>
</dbReference>
<dbReference type="Pfam" id="PF01725">
    <property type="entry name" value="Ham1p_like"/>
    <property type="match status" value="1"/>
</dbReference>
<dbReference type="SUPFAM" id="SSF52972">
    <property type="entry name" value="ITPase-like"/>
    <property type="match status" value="1"/>
</dbReference>
<sequence>MKQQSGLTMQQVVLATGNPGKVRELADLLAAFGLDIVAQTALGVESAEETGLTFIENAILKARHASAVTGLPAIADDSGLAVDVLGGAPGIYSARYAGEEATDRQNLDKLLAALNAVPDGERQAHFHCVLVYLRHAADPTPLVFHGSWTGEIAHSAAGVGGFGYDPIFFVPELGKTAAEMSKSEKLAVSHRGKALNLLLDAMKHG</sequence>
<accession>B2VEZ3</accession>
<reference key="1">
    <citation type="journal article" date="2008" name="Environ. Microbiol.">
        <title>The genome of Erwinia tasmaniensis strain Et1/99, a non-pathogenic bacterium in the genus Erwinia.</title>
        <authorList>
            <person name="Kube M."/>
            <person name="Migdoll A.M."/>
            <person name="Mueller I."/>
            <person name="Kuhl H."/>
            <person name="Beck A."/>
            <person name="Reinhardt R."/>
            <person name="Geider K."/>
        </authorList>
    </citation>
    <scope>NUCLEOTIDE SEQUENCE [LARGE SCALE GENOMIC DNA]</scope>
    <source>
        <strain>DSM 17950 / CFBP 7177 / CIP 109463 / NCPPB 4357 / Et1/99</strain>
    </source>
</reference>
<gene>
    <name type="ordered locus">ETA_28410</name>
</gene>
<organism>
    <name type="scientific">Erwinia tasmaniensis (strain DSM 17950 / CFBP 7177 / CIP 109463 / NCPPB 4357 / Et1/99)</name>
    <dbReference type="NCBI Taxonomy" id="465817"/>
    <lineage>
        <taxon>Bacteria</taxon>
        <taxon>Pseudomonadati</taxon>
        <taxon>Pseudomonadota</taxon>
        <taxon>Gammaproteobacteria</taxon>
        <taxon>Enterobacterales</taxon>
        <taxon>Erwiniaceae</taxon>
        <taxon>Erwinia</taxon>
    </lineage>
</organism>
<proteinExistence type="inferred from homology"/>
<name>IXTPA_ERWT9</name>
<evidence type="ECO:0000255" key="1">
    <source>
        <dbReference type="HAMAP-Rule" id="MF_01405"/>
    </source>
</evidence>